<keyword id="KW-0067">ATP-binding</keyword>
<keyword id="KW-0963">Cytoplasm</keyword>
<keyword id="KW-0319">Glycerol metabolism</keyword>
<keyword id="KW-0418">Kinase</keyword>
<keyword id="KW-0547">Nucleotide-binding</keyword>
<keyword id="KW-1185">Reference proteome</keyword>
<keyword id="KW-0808">Transferase</keyword>
<feature type="chain" id="PRO_0000323757" description="Glycerol kinase 5">
    <location>
        <begin position="1"/>
        <end position="529"/>
    </location>
</feature>
<feature type="binding site" evidence="1">
    <location>
        <position position="22"/>
    </location>
    <ligand>
        <name>ATP</name>
        <dbReference type="ChEBI" id="CHEBI:30616"/>
    </ligand>
</feature>
<feature type="binding site" evidence="1">
    <location>
        <position position="23"/>
    </location>
    <ligand>
        <name>ATP</name>
        <dbReference type="ChEBI" id="CHEBI:30616"/>
    </ligand>
</feature>
<feature type="binding site" evidence="1">
    <location>
        <position position="92"/>
    </location>
    <ligand>
        <name>glycerol</name>
        <dbReference type="ChEBI" id="CHEBI:17754"/>
    </ligand>
</feature>
<feature type="binding site" evidence="1">
    <location>
        <position position="269"/>
    </location>
    <ligand>
        <name>glycerol</name>
        <dbReference type="ChEBI" id="CHEBI:17754"/>
    </ligand>
</feature>
<feature type="binding site" evidence="1">
    <location>
        <position position="270"/>
    </location>
    <ligand>
        <name>glycerol</name>
        <dbReference type="ChEBI" id="CHEBI:17754"/>
    </ligand>
</feature>
<feature type="binding site" evidence="1">
    <location>
        <position position="291"/>
    </location>
    <ligand>
        <name>ATP</name>
        <dbReference type="ChEBI" id="CHEBI:30616"/>
    </ligand>
</feature>
<feature type="binding site" evidence="1">
    <location>
        <position position="334"/>
    </location>
    <ligand>
        <name>ATP</name>
        <dbReference type="ChEBI" id="CHEBI:30616"/>
    </ligand>
</feature>
<feature type="binding site" evidence="1">
    <location>
        <position position="434"/>
    </location>
    <ligand>
        <name>ATP</name>
        <dbReference type="ChEBI" id="CHEBI:30616"/>
    </ligand>
</feature>
<feature type="sequence conflict" description="In Ref. 1; AAI27391." evidence="3" ref="1">
    <original>V</original>
    <variation>M</variation>
    <location>
        <position position="20"/>
    </location>
</feature>
<feature type="sequence conflict" description="In Ref. 1; AAI27391." evidence="3" ref="1">
    <original>T</original>
    <variation>A</variation>
    <location>
        <position position="129"/>
    </location>
</feature>
<feature type="sequence conflict" description="In Ref. 1; AAI27391." evidence="3" ref="1">
    <original>T</original>
    <variation>S</variation>
    <location>
        <position position="184"/>
    </location>
</feature>
<feature type="sequence conflict" description="In Ref. 1; AAI27391." evidence="3" ref="1">
    <original>A</original>
    <variation>T</variation>
    <location>
        <position position="272"/>
    </location>
</feature>
<proteinExistence type="evidence at transcript level"/>
<sequence>MGTQRNGYSKRETFILSVDVGTTSIRCHVYDKSASIRGSCSAKVSLLYPQPGWVEIDPDELWDGFVTVVKGAVQDSGLQMCQMESLGISTQRATFMTWDRNTGKPFHKFITWQDMRAAELVRSWNGSCTMKTVHGVMKMLHFLSRQKRFLAASLVVFTTQHVSLRLVWALNNIPQLRQAVEDGTCYFGTIDTWLLYKLTKGLVHATDYSNASATAIFDSYQMCWSGFLCSLLSIPLSILPKVQDTSHKFGLCDSSIFGVPIPIMCVMADQQAAMFGECCFDTGDVKITMGTGTFMDINTGSKPHTSVAGLYPLVGWKIGADVVYLAEGNAAGTGAAIKWAQDLELFSDVKETEAIATSVEDSDGVFFVPSFSGLQAPLNDPKACASFMGLKPSTTKRHLVRAILESIAFRNKQLFDVMLRETRIPITKIRADGGVCTNDFIMQLTADLLGRKIARPSHFDMSCLGAAFVAGLGTGYWRNQEELKKLLSTDQHFLPRRSKSEGEKGGLYRGVLQSWEKALQRSMHWYNQP</sequence>
<evidence type="ECO:0000250" key="1">
    <source>
        <dbReference type="UniProtKB" id="P0A6F3"/>
    </source>
</evidence>
<evidence type="ECO:0000250" key="2">
    <source>
        <dbReference type="UniProtKB" id="Q8BX05"/>
    </source>
</evidence>
<evidence type="ECO:0000305" key="3"/>
<protein>
    <recommendedName>
        <fullName>Glycerol kinase 5</fullName>
        <shortName>GK 5</shortName>
        <shortName>Glycerokinase 5</shortName>
        <ecNumber evidence="2">2.7.1.30</ecNumber>
    </recommendedName>
    <alternativeName>
        <fullName>ATP:glycerol 3-phosphotransferase 5</fullName>
    </alternativeName>
</protein>
<accession>A0JPE9</accession>
<accession>A0A8N7UYF7</accession>
<accession>F1QS50</accession>
<comment type="function">
    <text evidence="2">Skin-specific kinase that plays a key role in glycerol metabolism, catalyzing its phosphorylation to produce sn-glycerol 3-phosphate. Involved in skin-specific regulation of sterol regulatory element-binding protein (SREBP) processing and lipid biosynthesis.</text>
</comment>
<comment type="catalytic activity">
    <reaction evidence="2">
        <text>glycerol + ATP = sn-glycerol 3-phosphate + ADP + H(+)</text>
        <dbReference type="Rhea" id="RHEA:21644"/>
        <dbReference type="ChEBI" id="CHEBI:15378"/>
        <dbReference type="ChEBI" id="CHEBI:17754"/>
        <dbReference type="ChEBI" id="CHEBI:30616"/>
        <dbReference type="ChEBI" id="CHEBI:57597"/>
        <dbReference type="ChEBI" id="CHEBI:456216"/>
        <dbReference type="EC" id="2.7.1.30"/>
    </reaction>
    <physiologicalReaction direction="left-to-right" evidence="2">
        <dbReference type="Rhea" id="RHEA:21645"/>
    </physiologicalReaction>
</comment>
<comment type="pathway">
    <text evidence="2">Polyol metabolism; glycerol degradation via glycerol kinase pathway; sn-glycerol 3-phosphate from glycerol: step 1/1.</text>
</comment>
<comment type="subcellular location">
    <subcellularLocation>
        <location evidence="2">Cytoplasm</location>
    </subcellularLocation>
</comment>
<comment type="similarity">
    <text evidence="3">Belongs to the FGGY kinase family.</text>
</comment>
<comment type="sequence caution" evidence="3">
    <conflict type="erroneous initiation">
        <sequence resource="EMBL-CDS" id="AAI27391"/>
    </conflict>
    <text>Truncated N-terminus.</text>
</comment>
<reference key="1">
    <citation type="submission" date="2006-11" db="EMBL/GenBank/DDBJ databases">
        <authorList>
            <consortium name="NIH - Zebrafish Gene Collection (ZGC) project"/>
        </authorList>
    </citation>
    <scope>NUCLEOTIDE SEQUENCE [LARGE SCALE MRNA]</scope>
</reference>
<reference key="2">
    <citation type="journal article" date="2013" name="Nature">
        <title>The zebrafish reference genome sequence and its relationship to the human genome.</title>
        <authorList>
            <person name="Howe K."/>
            <person name="Clark M.D."/>
            <person name="Torroja C.F."/>
            <person name="Torrance J."/>
            <person name="Berthelot C."/>
            <person name="Muffato M."/>
            <person name="Collins J.E."/>
            <person name="Humphray S."/>
            <person name="McLaren K."/>
            <person name="Matthews L."/>
            <person name="McLaren S."/>
            <person name="Sealy I."/>
            <person name="Caccamo M."/>
            <person name="Churcher C."/>
            <person name="Scott C."/>
            <person name="Barrett J.C."/>
            <person name="Koch R."/>
            <person name="Rauch G.J."/>
            <person name="White S."/>
            <person name="Chow W."/>
            <person name="Kilian B."/>
            <person name="Quintais L.T."/>
            <person name="Guerra-Assuncao J.A."/>
            <person name="Zhou Y."/>
            <person name="Gu Y."/>
            <person name="Yen J."/>
            <person name="Vogel J.H."/>
            <person name="Eyre T."/>
            <person name="Redmond S."/>
            <person name="Banerjee R."/>
            <person name="Chi J."/>
            <person name="Fu B."/>
            <person name="Langley E."/>
            <person name="Maguire S.F."/>
            <person name="Laird G.K."/>
            <person name="Lloyd D."/>
            <person name="Kenyon E."/>
            <person name="Donaldson S."/>
            <person name="Sehra H."/>
            <person name="Almeida-King J."/>
            <person name="Loveland J."/>
            <person name="Trevanion S."/>
            <person name="Jones M."/>
            <person name="Quail M."/>
            <person name="Willey D."/>
            <person name="Hunt A."/>
            <person name="Burton J."/>
            <person name="Sims S."/>
            <person name="McLay K."/>
            <person name="Plumb B."/>
            <person name="Davis J."/>
            <person name="Clee C."/>
            <person name="Oliver K."/>
            <person name="Clark R."/>
            <person name="Riddle C."/>
            <person name="Elliot D."/>
            <person name="Threadgold G."/>
            <person name="Harden G."/>
            <person name="Ware D."/>
            <person name="Begum S."/>
            <person name="Mortimore B."/>
            <person name="Kerry G."/>
            <person name="Heath P."/>
            <person name="Phillimore B."/>
            <person name="Tracey A."/>
            <person name="Corby N."/>
            <person name="Dunn M."/>
            <person name="Johnson C."/>
            <person name="Wood J."/>
            <person name="Clark S."/>
            <person name="Pelan S."/>
            <person name="Griffiths G."/>
            <person name="Smith M."/>
            <person name="Glithero R."/>
            <person name="Howden P."/>
            <person name="Barker N."/>
            <person name="Lloyd C."/>
            <person name="Stevens C."/>
            <person name="Harley J."/>
            <person name="Holt K."/>
            <person name="Panagiotidis G."/>
            <person name="Lovell J."/>
            <person name="Beasley H."/>
            <person name="Henderson C."/>
            <person name="Gordon D."/>
            <person name="Auger K."/>
            <person name="Wright D."/>
            <person name="Collins J."/>
            <person name="Raisen C."/>
            <person name="Dyer L."/>
            <person name="Leung K."/>
            <person name="Robertson L."/>
            <person name="Ambridge K."/>
            <person name="Leongamornlert D."/>
            <person name="McGuire S."/>
            <person name="Gilderthorp R."/>
            <person name="Griffiths C."/>
            <person name="Manthravadi D."/>
            <person name="Nichol S."/>
            <person name="Barker G."/>
            <person name="Whitehead S."/>
            <person name="Kay M."/>
            <person name="Brown J."/>
            <person name="Murnane C."/>
            <person name="Gray E."/>
            <person name="Humphries M."/>
            <person name="Sycamore N."/>
            <person name="Barker D."/>
            <person name="Saunders D."/>
            <person name="Wallis J."/>
            <person name="Babbage A."/>
            <person name="Hammond S."/>
            <person name="Mashreghi-Mohammadi M."/>
            <person name="Barr L."/>
            <person name="Martin S."/>
            <person name="Wray P."/>
            <person name="Ellington A."/>
            <person name="Matthews N."/>
            <person name="Ellwood M."/>
            <person name="Woodmansey R."/>
            <person name="Clark G."/>
            <person name="Cooper J."/>
            <person name="Tromans A."/>
            <person name="Grafham D."/>
            <person name="Skuce C."/>
            <person name="Pandian R."/>
            <person name="Andrews R."/>
            <person name="Harrison E."/>
            <person name="Kimberley A."/>
            <person name="Garnett J."/>
            <person name="Fosker N."/>
            <person name="Hall R."/>
            <person name="Garner P."/>
            <person name="Kelly D."/>
            <person name="Bird C."/>
            <person name="Palmer S."/>
            <person name="Gehring I."/>
            <person name="Berger A."/>
            <person name="Dooley C.M."/>
            <person name="Ersan-Urun Z."/>
            <person name="Eser C."/>
            <person name="Geiger H."/>
            <person name="Geisler M."/>
            <person name="Karotki L."/>
            <person name="Kirn A."/>
            <person name="Konantz J."/>
            <person name="Konantz M."/>
            <person name="Oberlander M."/>
            <person name="Rudolph-Geiger S."/>
            <person name="Teucke M."/>
            <person name="Lanz C."/>
            <person name="Raddatz G."/>
            <person name="Osoegawa K."/>
            <person name="Zhu B."/>
            <person name="Rapp A."/>
            <person name="Widaa S."/>
            <person name="Langford C."/>
            <person name="Yang F."/>
            <person name="Schuster S.C."/>
            <person name="Carter N.P."/>
            <person name="Harrow J."/>
            <person name="Ning Z."/>
            <person name="Herrero J."/>
            <person name="Searle S.M."/>
            <person name="Enright A."/>
            <person name="Geisler R."/>
            <person name="Plasterk R.H."/>
            <person name="Lee C."/>
            <person name="Westerfield M."/>
            <person name="de Jong P.J."/>
            <person name="Zon L.I."/>
            <person name="Postlethwait J.H."/>
            <person name="Nusslein-Volhard C."/>
            <person name="Hubbard T.J."/>
            <person name="Roest Crollius H."/>
            <person name="Rogers J."/>
            <person name="Stemple D.L."/>
        </authorList>
    </citation>
    <scope>NUCLEOTIDE SEQUENCE [LARGE SCALE GENOMIC DNA]</scope>
    <source>
        <strain>Tuebingen</strain>
    </source>
</reference>
<gene>
    <name type="primary">gk5</name>
    <name type="ORF">zgc:152983</name>
</gene>
<organism>
    <name type="scientific">Danio rerio</name>
    <name type="common">Zebrafish</name>
    <name type="synonym">Brachydanio rerio</name>
    <dbReference type="NCBI Taxonomy" id="7955"/>
    <lineage>
        <taxon>Eukaryota</taxon>
        <taxon>Metazoa</taxon>
        <taxon>Chordata</taxon>
        <taxon>Craniata</taxon>
        <taxon>Vertebrata</taxon>
        <taxon>Euteleostomi</taxon>
        <taxon>Actinopterygii</taxon>
        <taxon>Neopterygii</taxon>
        <taxon>Teleostei</taxon>
        <taxon>Ostariophysi</taxon>
        <taxon>Cypriniformes</taxon>
        <taxon>Danionidae</taxon>
        <taxon>Danioninae</taxon>
        <taxon>Danio</taxon>
    </lineage>
</organism>
<name>GLPK5_DANRE</name>
<dbReference type="EC" id="2.7.1.30" evidence="2"/>
<dbReference type="EMBL" id="BC127390">
    <property type="protein sequence ID" value="AAI27391.1"/>
    <property type="status" value="ALT_INIT"/>
    <property type="molecule type" value="mRNA"/>
</dbReference>
<dbReference type="EMBL" id="CU929296">
    <property type="status" value="NOT_ANNOTATED_CDS"/>
    <property type="molecule type" value="Genomic_DNA"/>
</dbReference>
<dbReference type="EMBL" id="CU929319">
    <property type="status" value="NOT_ANNOTATED_CDS"/>
    <property type="molecule type" value="Genomic_DNA"/>
</dbReference>
<dbReference type="RefSeq" id="NP_001071271.3">
    <property type="nucleotide sequence ID" value="NM_001077803.3"/>
</dbReference>
<dbReference type="SMR" id="A0JPE9"/>
<dbReference type="FunCoup" id="A0JPE9">
    <property type="interactions" value="562"/>
</dbReference>
<dbReference type="STRING" id="7955.ENSDARP00000085784"/>
<dbReference type="PaxDb" id="7955-ENSDARP00000085784"/>
<dbReference type="GeneID" id="777765"/>
<dbReference type="KEGG" id="dre:777765"/>
<dbReference type="AGR" id="ZFIN:ZDB-GENE-061110-49"/>
<dbReference type="CTD" id="256356"/>
<dbReference type="ZFIN" id="ZDB-GENE-061110-49">
    <property type="gene designation" value="gk5"/>
</dbReference>
<dbReference type="eggNOG" id="KOG2517">
    <property type="taxonomic scope" value="Eukaryota"/>
</dbReference>
<dbReference type="HOGENOM" id="CLU_009281_2_3_1"/>
<dbReference type="InParanoid" id="A0JPE9"/>
<dbReference type="OMA" id="TFLTWNH"/>
<dbReference type="OrthoDB" id="6278781at2759"/>
<dbReference type="PhylomeDB" id="A0JPE9"/>
<dbReference type="TreeFam" id="TF321504"/>
<dbReference type="UniPathway" id="UPA00618">
    <property type="reaction ID" value="UER00672"/>
</dbReference>
<dbReference type="PRO" id="PR:A0JPE9"/>
<dbReference type="Proteomes" id="UP000000437">
    <property type="component" value="Chromosome 2"/>
</dbReference>
<dbReference type="Bgee" id="ENSDARG00000062864">
    <property type="expression patterns" value="Expressed in liver and 25 other cell types or tissues"/>
</dbReference>
<dbReference type="GO" id="GO:0005737">
    <property type="term" value="C:cytoplasm"/>
    <property type="evidence" value="ECO:0000250"/>
    <property type="project" value="UniProtKB"/>
</dbReference>
<dbReference type="GO" id="GO:0005739">
    <property type="term" value="C:mitochondrion"/>
    <property type="evidence" value="ECO:0000318"/>
    <property type="project" value="GO_Central"/>
</dbReference>
<dbReference type="GO" id="GO:0005524">
    <property type="term" value="F:ATP binding"/>
    <property type="evidence" value="ECO:0007669"/>
    <property type="project" value="UniProtKB-KW"/>
</dbReference>
<dbReference type="GO" id="GO:0004370">
    <property type="term" value="F:glycerol kinase activity"/>
    <property type="evidence" value="ECO:0000250"/>
    <property type="project" value="UniProtKB"/>
</dbReference>
<dbReference type="GO" id="GO:0019563">
    <property type="term" value="P:glycerol catabolic process"/>
    <property type="evidence" value="ECO:0007669"/>
    <property type="project" value="UniProtKB-UniPathway"/>
</dbReference>
<dbReference type="GO" id="GO:0006071">
    <property type="term" value="P:glycerol metabolic process"/>
    <property type="evidence" value="ECO:0000318"/>
    <property type="project" value="GO_Central"/>
</dbReference>
<dbReference type="GO" id="GO:0046167">
    <property type="term" value="P:glycerol-3-phosphate biosynthetic process"/>
    <property type="evidence" value="ECO:0000250"/>
    <property type="project" value="UniProtKB"/>
</dbReference>
<dbReference type="GO" id="GO:0006641">
    <property type="term" value="P:triglyceride metabolic process"/>
    <property type="evidence" value="ECO:0000318"/>
    <property type="project" value="GO_Central"/>
</dbReference>
<dbReference type="CDD" id="cd07793">
    <property type="entry name" value="ASKHA_NBD_FGGY_GK5-like"/>
    <property type="match status" value="1"/>
</dbReference>
<dbReference type="FunFam" id="3.30.420.40:FF:000102">
    <property type="entry name" value="Putative glycerol kinase 5"/>
    <property type="match status" value="1"/>
</dbReference>
<dbReference type="FunFam" id="3.30.420.40:FF:000104">
    <property type="entry name" value="putative glycerol kinase 5"/>
    <property type="match status" value="1"/>
</dbReference>
<dbReference type="Gene3D" id="3.30.420.40">
    <property type="match status" value="2"/>
</dbReference>
<dbReference type="InterPro" id="IPR043129">
    <property type="entry name" value="ATPase_NBD"/>
</dbReference>
<dbReference type="InterPro" id="IPR000577">
    <property type="entry name" value="Carb_kinase_FGGY"/>
</dbReference>
<dbReference type="InterPro" id="IPR018483">
    <property type="entry name" value="Carb_kinase_FGGY_CS"/>
</dbReference>
<dbReference type="InterPro" id="IPR018485">
    <property type="entry name" value="FGGY_C"/>
</dbReference>
<dbReference type="InterPro" id="IPR018484">
    <property type="entry name" value="FGGY_N"/>
</dbReference>
<dbReference type="InterPro" id="IPR037444">
    <property type="entry name" value="GK5"/>
</dbReference>
<dbReference type="PANTHER" id="PTHR10196:SF68">
    <property type="entry name" value="GLYCEROL KINASE 5-RELATED"/>
    <property type="match status" value="1"/>
</dbReference>
<dbReference type="PANTHER" id="PTHR10196">
    <property type="entry name" value="SUGAR KINASE"/>
    <property type="match status" value="1"/>
</dbReference>
<dbReference type="Pfam" id="PF02782">
    <property type="entry name" value="FGGY_C"/>
    <property type="match status" value="1"/>
</dbReference>
<dbReference type="Pfam" id="PF00370">
    <property type="entry name" value="FGGY_N"/>
    <property type="match status" value="1"/>
</dbReference>
<dbReference type="PIRSF" id="PIRSF000538">
    <property type="entry name" value="GlpK"/>
    <property type="match status" value="1"/>
</dbReference>
<dbReference type="SUPFAM" id="SSF53067">
    <property type="entry name" value="Actin-like ATPase domain"/>
    <property type="match status" value="2"/>
</dbReference>
<dbReference type="PROSITE" id="PS00445">
    <property type="entry name" value="FGGY_KINASES_2"/>
    <property type="match status" value="1"/>
</dbReference>